<proteinExistence type="evidence at protein level"/>
<dbReference type="EMBL" id="Z81018">
    <property type="protein sequence ID" value="CAB02675.1"/>
    <property type="molecule type" value="mRNA"/>
</dbReference>
<dbReference type="RefSeq" id="NP_001003220.1">
    <property type="nucleotide sequence ID" value="NM_001003220.1"/>
</dbReference>
<dbReference type="SMR" id="Q95152"/>
<dbReference type="FunCoup" id="Q95152">
    <property type="interactions" value="7"/>
</dbReference>
<dbReference type="STRING" id="9615.ENSCAFP00000024086"/>
<dbReference type="GlyCosmos" id="Q95152">
    <property type="glycosylation" value="20 sites, No reported glycans"/>
</dbReference>
<dbReference type="PaxDb" id="9612-ENSCAFP00000024086"/>
<dbReference type="Ensembl" id="ENSCAFT00030028693.1">
    <property type="protein sequence ID" value="ENSCAFP00030025018.1"/>
    <property type="gene ID" value="ENSCAFG00030015564.1"/>
</dbReference>
<dbReference type="Ensembl" id="ENSCAFT00040008380.1">
    <property type="protein sequence ID" value="ENSCAFP00040007283.1"/>
    <property type="gene ID" value="ENSCAFG00040004415.1"/>
</dbReference>
<dbReference type="Ensembl" id="ENSCAFT00040008401.1">
    <property type="protein sequence ID" value="ENSCAFP00040007295.1"/>
    <property type="gene ID" value="ENSCAFG00040004415.1"/>
</dbReference>
<dbReference type="GeneID" id="403886"/>
<dbReference type="KEGG" id="cfa:403886"/>
<dbReference type="CTD" id="10630"/>
<dbReference type="eggNOG" id="ENOG502QRWU">
    <property type="taxonomic scope" value="Eukaryota"/>
</dbReference>
<dbReference type="InParanoid" id="Q95152"/>
<dbReference type="OrthoDB" id="9633724at2759"/>
<dbReference type="Reactome" id="R-CFA-114604">
    <property type="pathway name" value="GPVI-mediated activation cascade"/>
</dbReference>
<dbReference type="Proteomes" id="UP000002254">
    <property type="component" value="Unplaced"/>
</dbReference>
<dbReference type="Proteomes" id="UP000694429">
    <property type="component" value="Chromosome 2"/>
</dbReference>
<dbReference type="Proteomes" id="UP000694542">
    <property type="component" value="Chromosome 2"/>
</dbReference>
<dbReference type="Proteomes" id="UP000805418">
    <property type="component" value="Unplaced"/>
</dbReference>
<dbReference type="GO" id="GO:0070161">
    <property type="term" value="C:anchoring junction"/>
    <property type="evidence" value="ECO:0007669"/>
    <property type="project" value="UniProtKB-KW"/>
</dbReference>
<dbReference type="GO" id="GO:0016324">
    <property type="term" value="C:apical plasma membrane"/>
    <property type="evidence" value="ECO:0000250"/>
    <property type="project" value="UniProtKB"/>
</dbReference>
<dbReference type="GO" id="GO:0016323">
    <property type="term" value="C:basolateral plasma membrane"/>
    <property type="evidence" value="ECO:0000250"/>
    <property type="project" value="UniProtKB"/>
</dbReference>
<dbReference type="GO" id="GO:0042995">
    <property type="term" value="C:cell projection"/>
    <property type="evidence" value="ECO:0000250"/>
    <property type="project" value="UniProtKB"/>
</dbReference>
<dbReference type="GO" id="GO:0031410">
    <property type="term" value="C:cytoplasmic vesicle"/>
    <property type="evidence" value="ECO:0000250"/>
    <property type="project" value="UniProtKB"/>
</dbReference>
<dbReference type="GO" id="GO:0005829">
    <property type="term" value="C:cytosol"/>
    <property type="evidence" value="ECO:0000250"/>
    <property type="project" value="UniProtKB"/>
</dbReference>
<dbReference type="GO" id="GO:0030175">
    <property type="term" value="C:filopodium"/>
    <property type="evidence" value="ECO:0000250"/>
    <property type="project" value="UniProtKB"/>
</dbReference>
<dbReference type="GO" id="GO:0031527">
    <property type="term" value="C:filopodium membrane"/>
    <property type="evidence" value="ECO:0000250"/>
    <property type="project" value="UniProtKB"/>
</dbReference>
<dbReference type="GO" id="GO:0030027">
    <property type="term" value="C:lamellipodium"/>
    <property type="evidence" value="ECO:0000250"/>
    <property type="project" value="UniProtKB"/>
</dbReference>
<dbReference type="GO" id="GO:0031258">
    <property type="term" value="C:lamellipodium membrane"/>
    <property type="evidence" value="ECO:0000250"/>
    <property type="project" value="UniProtKB"/>
</dbReference>
<dbReference type="GO" id="GO:0061851">
    <property type="term" value="C:leading edge of lamellipodium"/>
    <property type="evidence" value="ECO:0000250"/>
    <property type="project" value="UniProtKB"/>
</dbReference>
<dbReference type="GO" id="GO:0016020">
    <property type="term" value="C:membrane"/>
    <property type="evidence" value="ECO:0000250"/>
    <property type="project" value="UniProtKB"/>
</dbReference>
<dbReference type="GO" id="GO:0045121">
    <property type="term" value="C:membrane raft"/>
    <property type="evidence" value="ECO:0000250"/>
    <property type="project" value="UniProtKB"/>
</dbReference>
<dbReference type="GO" id="GO:0031528">
    <property type="term" value="C:microvillus membrane"/>
    <property type="evidence" value="ECO:0000250"/>
    <property type="project" value="UniProtKB"/>
</dbReference>
<dbReference type="GO" id="GO:0005886">
    <property type="term" value="C:plasma membrane"/>
    <property type="evidence" value="ECO:0000250"/>
    <property type="project" value="UniProtKB"/>
</dbReference>
<dbReference type="GO" id="GO:0001726">
    <property type="term" value="C:ruffle"/>
    <property type="evidence" value="ECO:0000250"/>
    <property type="project" value="UniProtKB"/>
</dbReference>
<dbReference type="GO" id="GO:0032587">
    <property type="term" value="C:ruffle membrane"/>
    <property type="evidence" value="ECO:0000250"/>
    <property type="project" value="UniProtKB"/>
</dbReference>
<dbReference type="GO" id="GO:0097197">
    <property type="term" value="C:tetraspanin-enriched microdomain"/>
    <property type="evidence" value="ECO:0000250"/>
    <property type="project" value="UniProtKB"/>
</dbReference>
<dbReference type="GO" id="GO:0070252">
    <property type="term" value="P:actin-mediated cell contraction"/>
    <property type="evidence" value="ECO:0000250"/>
    <property type="project" value="UniProtKB"/>
</dbReference>
<dbReference type="GO" id="GO:0007155">
    <property type="term" value="P:cell adhesion"/>
    <property type="evidence" value="ECO:0000318"/>
    <property type="project" value="GO_Central"/>
</dbReference>
<dbReference type="GO" id="GO:0016477">
    <property type="term" value="P:cell migration"/>
    <property type="evidence" value="ECO:0000250"/>
    <property type="project" value="UniProtKB"/>
</dbReference>
<dbReference type="GO" id="GO:0030324">
    <property type="term" value="P:lung development"/>
    <property type="evidence" value="ECO:0000250"/>
    <property type="project" value="UniProtKB"/>
</dbReference>
<dbReference type="GO" id="GO:0048535">
    <property type="term" value="P:lymph node development"/>
    <property type="evidence" value="ECO:0000250"/>
    <property type="project" value="UniProtKB"/>
</dbReference>
<dbReference type="GO" id="GO:0001946">
    <property type="term" value="P:lymphangiogenesis"/>
    <property type="evidence" value="ECO:0000250"/>
    <property type="project" value="UniProtKB"/>
</dbReference>
<dbReference type="GO" id="GO:0060838">
    <property type="term" value="P:lymphatic endothelial cell fate commitment"/>
    <property type="evidence" value="ECO:0000250"/>
    <property type="project" value="UniProtKB"/>
</dbReference>
<dbReference type="GO" id="GO:0043066">
    <property type="term" value="P:negative regulation of apoptotic process"/>
    <property type="evidence" value="ECO:0000250"/>
    <property type="project" value="UniProtKB"/>
</dbReference>
<dbReference type="GO" id="GO:0008285">
    <property type="term" value="P:negative regulation of cell population proliferation"/>
    <property type="evidence" value="ECO:0000250"/>
    <property type="project" value="UniProtKB"/>
</dbReference>
<dbReference type="GO" id="GO:0030335">
    <property type="term" value="P:positive regulation of cell migration"/>
    <property type="evidence" value="ECO:0000250"/>
    <property type="project" value="UniProtKB"/>
</dbReference>
<dbReference type="GO" id="GO:0010718">
    <property type="term" value="P:positive regulation of epithelial to mesenchymal transition"/>
    <property type="evidence" value="ECO:0000250"/>
    <property type="project" value="UniProtKB"/>
</dbReference>
<dbReference type="GO" id="GO:0090091">
    <property type="term" value="P:positive regulation of extracellular matrix disassembly"/>
    <property type="evidence" value="ECO:0000250"/>
    <property type="project" value="UniProtKB"/>
</dbReference>
<dbReference type="GO" id="GO:1901731">
    <property type="term" value="P:positive regulation of platelet aggregation"/>
    <property type="evidence" value="ECO:0000250"/>
    <property type="project" value="UniProtKB"/>
</dbReference>
<dbReference type="GO" id="GO:0030155">
    <property type="term" value="P:regulation of cell adhesion"/>
    <property type="evidence" value="ECO:0000250"/>
    <property type="project" value="UniProtKB"/>
</dbReference>
<dbReference type="GO" id="GO:0008360">
    <property type="term" value="P:regulation of cell shape"/>
    <property type="evidence" value="ECO:0007669"/>
    <property type="project" value="UniProtKB-KW"/>
</dbReference>
<dbReference type="GO" id="GO:2000392">
    <property type="term" value="P:regulation of lamellipodium morphogenesis"/>
    <property type="evidence" value="ECO:0000250"/>
    <property type="project" value="UniProtKB"/>
</dbReference>
<dbReference type="GO" id="GO:1904328">
    <property type="term" value="P:regulation of myofibroblast contraction"/>
    <property type="evidence" value="ECO:0000250"/>
    <property type="project" value="UniProtKB"/>
</dbReference>
<dbReference type="GO" id="GO:1900024">
    <property type="term" value="P:regulation of substrate adhesion-dependent cell spreading"/>
    <property type="evidence" value="ECO:0000250"/>
    <property type="project" value="UniProtKB"/>
</dbReference>
<dbReference type="GO" id="GO:0007266">
    <property type="term" value="P:Rho protein signal transduction"/>
    <property type="evidence" value="ECO:0000250"/>
    <property type="project" value="UniProtKB"/>
</dbReference>
<dbReference type="GO" id="GO:0007165">
    <property type="term" value="P:signal transduction"/>
    <property type="evidence" value="ECO:0000318"/>
    <property type="project" value="GO_Central"/>
</dbReference>
<dbReference type="GO" id="GO:0044319">
    <property type="term" value="P:wound healing, spreading of cells"/>
    <property type="evidence" value="ECO:0000250"/>
    <property type="project" value="UniProtKB"/>
</dbReference>
<dbReference type="InterPro" id="IPR052684">
    <property type="entry name" value="Podoplanin_domain"/>
</dbReference>
<dbReference type="PANTHER" id="PTHR47390">
    <property type="entry name" value="PODOPLANIN"/>
    <property type="match status" value="1"/>
</dbReference>
<dbReference type="PANTHER" id="PTHR47390:SF1">
    <property type="entry name" value="PODOPLANIN"/>
    <property type="match status" value="1"/>
</dbReference>
<dbReference type="Pfam" id="PF05808">
    <property type="entry name" value="Podoplanin"/>
    <property type="match status" value="1"/>
</dbReference>
<protein>
    <recommendedName>
        <fullName evidence="3">Podoplanin</fullName>
    </recommendedName>
    <alternativeName>
        <fullName evidence="6">Mucin-type membrane protein Gp40</fullName>
        <shortName evidence="6">Gp40</shortName>
    </alternativeName>
</protein>
<sequence length="169" mass="17574">MWRVPVLLLVLGGAGLRVPAAGASTVRPDDIIPGVEDSVVTPGTEDSVVTPGAEDNVVTDGATEEPYESGLTPLVTKNTESVTDLHLEDGPTQESTVHAKEESQSTTTLNVVTSHSREKVGEDTETTVEKDGLATVTLVGIIVGVLLAIGFIGGIIIVVARKMSGRYSP</sequence>
<keyword id="KW-0965">Cell junction</keyword>
<keyword id="KW-1003">Cell membrane</keyword>
<keyword id="KW-0966">Cell projection</keyword>
<keyword id="KW-0133">Cell shape</keyword>
<keyword id="KW-0217">Developmental protein</keyword>
<keyword id="KW-0903">Direct protein sequencing</keyword>
<keyword id="KW-0325">Glycoprotein</keyword>
<keyword id="KW-0472">Membrane</keyword>
<keyword id="KW-1185">Reference proteome</keyword>
<keyword id="KW-0730">Sialic acid</keyword>
<keyword id="KW-0732">Signal</keyword>
<keyword id="KW-0812">Transmembrane</keyword>
<keyword id="KW-1133">Transmembrane helix</keyword>
<organism>
    <name type="scientific">Canis lupus familiaris</name>
    <name type="common">Dog</name>
    <name type="synonym">Canis familiaris</name>
    <dbReference type="NCBI Taxonomy" id="9615"/>
    <lineage>
        <taxon>Eukaryota</taxon>
        <taxon>Metazoa</taxon>
        <taxon>Chordata</taxon>
        <taxon>Craniata</taxon>
        <taxon>Vertebrata</taxon>
        <taxon>Euteleostomi</taxon>
        <taxon>Mammalia</taxon>
        <taxon>Eutheria</taxon>
        <taxon>Laurasiatheria</taxon>
        <taxon>Carnivora</taxon>
        <taxon>Caniformia</taxon>
        <taxon>Canidae</taxon>
        <taxon>Canis</taxon>
    </lineage>
</organism>
<gene>
    <name type="primary">PDPN</name>
    <name type="synonym">GP40</name>
</gene>
<reference key="1">
    <citation type="journal article" date="1997" name="Biochem. J.">
        <title>Molecular characterization of gp40, a mucin-type glycoprotein from the apical plasma membrane of Madin-Darby canine kidney cells (type I).</title>
        <authorList>
            <person name="Zimmer G."/>
            <person name="Lottspeich F."/>
            <person name="Maisner A."/>
            <person name="Klenk H.-D."/>
            <person name="Herrler G."/>
        </authorList>
    </citation>
    <scope>NUCLEOTIDE SEQUENCE [MRNA]</scope>
    <scope>PARTIAL PROTEIN SEQUENCE</scope>
    <source>
        <strain>Cocker spaniel</strain>
        <tissue>Kidney</tissue>
    </source>
</reference>
<comment type="function">
    <text evidence="1 3">Mediates effects on cell migration and adhesion through its different partners. During development plays a role in blood and lymphatic vessels separation by binding CLEC1B, triggering CLEC1B activation in platelets and leading to platelet activation and/or aggregation. Interaction with CD9, on the contrary, attenuates platelet aggregation and pulmonary metastasis induced by PDPN. Mediates effects on cell migration and adhesion through its different partners. Through MSN or EZR interaction promotes epithelial-mesenchymal transition (EMT) leading to ERZ phosphorylation and triggering RHOA activation leading to cell migration increase and invasiveness. Interaction with CD44 promotes directional cell migration in epithelial and tumor cells (By similarity). In lymph nodes (LNs), controls fibroblastic reticular cells (FRCs) adhesion to the extracellular matrix (ECM) and contraction of the actomyosin by maintaining ERM proteins (EZR; MSN and RDX) and MYL9 activation through association with unknown transmembrane proteins. Engagement of CLEC1B by PDPN promotes FRCs relaxation by blocking lateral membrane interactions leading to reduction of ERM proteins (EZR; MSN and RDX) and MYL9 activation (By similarity). Through binding with LGALS8 may participate in connection of the lymphatic endothelium to the surrounding extracellular matrix. In keratinocytes, induces changes in cell morphology showing an elongated shape, numerous membrane protrusions, major reorganization of the actin cytoskeleton, increased motility and decreased cell adhesion. Controls invadopodia stability and maturation leading to efficient degradation of the extracellular matrix (ECM) in tumor cells through modulation of RHOC activity in order to activate ROCK1/ROCK2 and LIMK1/LIMK2 and inactivation of CFL1 (By similarity). Required for normal lung cell proliferation and alveolus formation at birth (By similarity). Does not function as a water channel or as a regulator of aquaporin-type water channels (By similarity). Does not have any effect on folic acid or amino acid transport (By similarity).</text>
</comment>
<comment type="subunit">
    <text evidence="3">Homodimer. Interacts with CLEC1B; the interaction is independent of CLEC1B glycosylation and activates CLEC1B; the interaction is dependent of sialic acid on O-glycans. Interacts with CD9; this interaction is homophilic and attenuates platelet aggregation and pulmonary metastasis induced by PDPN. Interacts with LGALS8; the interaction is glycosylation-dependent; may participate in connection of the lymphatic endothelium to the surrounding extracellular matrix. Interacts with HSPA9. Interacts (via extracellular domain) with CD44; this interaction is required for PDPN-mediated directional migration and regulation of lamellipodia extension/stabilization during cell spreading and migration. Interacts (via cytoplasmic domain) with MSN and EZR; activates RHOA and promotes epithelial-mesenchymal transition. Interacts with CCL21; relocalized PDPN to the basolateral membrane.</text>
</comment>
<comment type="subcellular location">
    <subcellularLocation>
        <location evidence="1">Membrane</location>
        <topology evidence="4">Single-pass type I membrane protein</topology>
    </subcellularLocation>
    <subcellularLocation>
        <location evidence="1">Cell projection</location>
        <location evidence="1">Filopodium membrane</location>
        <topology evidence="4">Single-pass type I membrane protein</topology>
    </subcellularLocation>
    <subcellularLocation>
        <location evidence="1">Cell projection</location>
        <location evidence="1">Lamellipodium membrane</location>
        <topology evidence="4">Single-pass type I membrane protein</topology>
    </subcellularLocation>
    <subcellularLocation>
        <location evidence="1">Cell projection</location>
        <location evidence="1">Microvillus membrane</location>
        <topology evidence="4">Single-pass type I membrane protein</topology>
    </subcellularLocation>
    <subcellularLocation>
        <location evidence="1">Cell projection</location>
        <location evidence="1">Ruffle membrane</location>
        <topology evidence="4">Single-pass type I membrane protein</topology>
    </subcellularLocation>
    <subcellularLocation>
        <location evidence="3">Membrane raft</location>
    </subcellularLocation>
    <subcellularLocation>
        <location evidence="3">Apical cell membrane</location>
    </subcellularLocation>
    <subcellularLocation>
        <location evidence="3">Basolateral cell membrane</location>
    </subcellularLocation>
    <subcellularLocation>
        <location evidence="3">Cell projection</location>
        <location evidence="3">Invadopodium</location>
    </subcellularLocation>
    <text evidence="1 3">Localized to actin-rich microvilli and plasma membrane projections such as filopodia, lamellipodia and ruffles (By similarity). Association to the lipid rafts is required for PDPN-induced epithelial to mesenchymal transition (EMT). Colocalizes with CD9 in tetraspanin microdomains. Localized at invadopodium adhesion rings in tumor cell. Association to the lipid rafts is essential for PDPN recruitment to invadopodia and ECM degradation (By similarity).</text>
</comment>
<comment type="domain">
    <text evidence="1 3">The cytoplasmic domain controls FRC elongation but is dispensable for contraction (By similarity). The cytoplasmic domain is essential for recruitment to invadopodia and ECM degradation (By similarity).</text>
</comment>
<comment type="PTM">
    <text evidence="3">Extensively O-glycosylated. Contains sialic acid residues. O-glycosylation is necessary for platelet aggregation activity. Disialylated at Thr-59; sialic acid is critical for platelet-aggregating activity and for CLEC1B interaction.</text>
</comment>
<comment type="PTM">
    <text evidence="2">The N-terminus is blocked.</text>
</comment>
<comment type="similarity">
    <text evidence="7">Belongs to the podoplanin family.</text>
</comment>
<feature type="signal peptide" evidence="3">
    <location>
        <begin position="1"/>
        <end position="22"/>
    </location>
</feature>
<feature type="chain" id="PRO_0000021351" description="Podoplanin">
    <location>
        <begin position="23"/>
        <end position="169"/>
    </location>
</feature>
<feature type="topological domain" description="Extracellular" evidence="4">
    <location>
        <begin position="23"/>
        <end position="138"/>
    </location>
</feature>
<feature type="transmembrane region" description="Helical" evidence="4">
    <location>
        <begin position="139"/>
        <end position="159"/>
    </location>
</feature>
<feature type="topological domain" description="Cytoplasmic" evidence="4">
    <location>
        <begin position="160"/>
        <end position="169"/>
    </location>
</feature>
<feature type="region of interest" description="Disordered" evidence="5">
    <location>
        <begin position="37"/>
        <end position="69"/>
    </location>
</feature>
<feature type="region of interest" description="Requires for dimerization and lipid rafts association" evidence="3">
    <location>
        <begin position="140"/>
        <end position="144"/>
    </location>
</feature>
<feature type="region of interest" description="Requires for interaction with MSN and EZR" evidence="3">
    <location>
        <begin position="161"/>
        <end position="162"/>
    </location>
</feature>
<feature type="glycosylation site" description="O-linked (GalNAc...) threonine" evidence="4">
    <location>
        <position position="25"/>
    </location>
</feature>
<feature type="glycosylation site" description="O-linked (GalNAc...) serine" evidence="4">
    <location>
        <position position="38"/>
    </location>
</feature>
<feature type="glycosylation site" description="O-linked (GalNAc...) threonine" evidence="4">
    <location>
        <position position="41"/>
    </location>
</feature>
<feature type="glycosylation site" description="O-linked (GalNAc...) threonine" evidence="4">
    <location>
        <position position="44"/>
    </location>
</feature>
<feature type="glycosylation site" description="O-linked (GalNAc...) serine" evidence="4">
    <location>
        <position position="47"/>
    </location>
</feature>
<feature type="glycosylation site" description="O-linked (GalNAc...) threonine" evidence="4">
    <location>
        <position position="50"/>
    </location>
</feature>
<feature type="glycosylation site" description="O-linked (GalNAc...) threonine" evidence="3">
    <location>
        <position position="59"/>
    </location>
</feature>
<feature type="glycosylation site" description="O-linked (GalNAc...) threonine" evidence="4">
    <location>
        <position position="63"/>
    </location>
</feature>
<feature type="glycosylation site" description="O-linked (GalNAc...) threonine" evidence="4">
    <location>
        <position position="72"/>
    </location>
</feature>
<feature type="glycosylation site" description="O-linked (GalNAc...) threonine" evidence="4">
    <location>
        <position position="76"/>
    </location>
</feature>
<feature type="glycosylation site" description="O-linked (GalNAc...) threonine" evidence="4">
    <location>
        <position position="79"/>
    </location>
</feature>
<feature type="glycosylation site" description="O-linked (GalNAc...) threonine" evidence="4">
    <location>
        <position position="83"/>
    </location>
</feature>
<feature type="glycosylation site" description="O-linked (GalNAc...) threonine" evidence="4">
    <location>
        <position position="92"/>
    </location>
</feature>
<feature type="glycosylation site" description="O-linked (GalNAc...) threonine" evidence="4">
    <location>
        <position position="96"/>
    </location>
</feature>
<feature type="glycosylation site" description="O-linked (GalNAc...) threonine" evidence="4">
    <location>
        <position position="106"/>
    </location>
</feature>
<feature type="glycosylation site" description="O-linked (GalNAc...) threonine" evidence="4">
    <location>
        <position position="107"/>
    </location>
</feature>
<feature type="glycosylation site" description="O-linked (GalNAc...) threonine" evidence="4">
    <location>
        <position position="108"/>
    </location>
</feature>
<feature type="glycosylation site" description="O-linked (GalNAc...) threonine" evidence="4">
    <location>
        <position position="113"/>
    </location>
</feature>
<feature type="glycosylation site" description="O-linked (GalNAc...) threonine" evidence="4">
    <location>
        <position position="126"/>
    </location>
</feature>
<feature type="glycosylation site" description="O-linked (GalNAc...) threonine" evidence="4">
    <location>
        <position position="127"/>
    </location>
</feature>
<name>PDPN_CANLF</name>
<evidence type="ECO:0000250" key="1">
    <source>
        <dbReference type="UniProtKB" id="Q62011"/>
    </source>
</evidence>
<evidence type="ECO:0000250" key="2">
    <source>
        <dbReference type="UniProtKB" id="Q64294"/>
    </source>
</evidence>
<evidence type="ECO:0000250" key="3">
    <source>
        <dbReference type="UniProtKB" id="Q86YL7"/>
    </source>
</evidence>
<evidence type="ECO:0000255" key="4"/>
<evidence type="ECO:0000256" key="5">
    <source>
        <dbReference type="SAM" id="MobiDB-lite"/>
    </source>
</evidence>
<evidence type="ECO:0000303" key="6">
    <source>
    </source>
</evidence>
<evidence type="ECO:0000305" key="7"/>
<accession>Q95152</accession>